<accession>B4U4I9</accession>
<sequence length="274" mass="30295">MTLQEDIIRQLGVKAVIDPKQEIRQSVDFLKAYLLKHPFLKTYVLGISGGQDSSLAGKLAQMAIEELRAETGDEQYQFIAVRLPYGVQADEADAQKALAFIQPDQALTVNIKEAVDGQLRALETAGLEISDFNKGNIKARQRMISQYAIAGQTAGAVIGTDHAAENVTGFFTKFGDGGADILPLFRLTKRQGKALLKALKADPSLYEKVPTADLEDKKPGLADEVALGVSYQEIDDYLEGHTISAEAQARIEDWWHKGQHKRHLPITIFDDFWK</sequence>
<evidence type="ECO:0000255" key="1">
    <source>
        <dbReference type="HAMAP-Rule" id="MF_00193"/>
    </source>
</evidence>
<feature type="chain" id="PRO_1000099048" description="NH(3)-dependent NAD(+) synthetase">
    <location>
        <begin position="1"/>
        <end position="274"/>
    </location>
</feature>
<feature type="binding site" evidence="1">
    <location>
        <begin position="46"/>
        <end position="53"/>
    </location>
    <ligand>
        <name>ATP</name>
        <dbReference type="ChEBI" id="CHEBI:30616"/>
    </ligand>
</feature>
<feature type="binding site" evidence="1">
    <location>
        <position position="52"/>
    </location>
    <ligand>
        <name>Mg(2+)</name>
        <dbReference type="ChEBI" id="CHEBI:18420"/>
    </ligand>
</feature>
<feature type="binding site" evidence="1">
    <location>
        <position position="140"/>
    </location>
    <ligand>
        <name>deamido-NAD(+)</name>
        <dbReference type="ChEBI" id="CHEBI:58437"/>
    </ligand>
</feature>
<feature type="binding site" evidence="1">
    <location>
        <position position="160"/>
    </location>
    <ligand>
        <name>ATP</name>
        <dbReference type="ChEBI" id="CHEBI:30616"/>
    </ligand>
</feature>
<feature type="binding site" evidence="1">
    <location>
        <position position="165"/>
    </location>
    <ligand>
        <name>Mg(2+)</name>
        <dbReference type="ChEBI" id="CHEBI:18420"/>
    </ligand>
</feature>
<feature type="binding site" evidence="1">
    <location>
        <position position="173"/>
    </location>
    <ligand>
        <name>deamido-NAD(+)</name>
        <dbReference type="ChEBI" id="CHEBI:58437"/>
    </ligand>
</feature>
<feature type="binding site" evidence="1">
    <location>
        <position position="180"/>
    </location>
    <ligand>
        <name>deamido-NAD(+)</name>
        <dbReference type="ChEBI" id="CHEBI:58437"/>
    </ligand>
</feature>
<feature type="binding site" evidence="1">
    <location>
        <position position="189"/>
    </location>
    <ligand>
        <name>ATP</name>
        <dbReference type="ChEBI" id="CHEBI:30616"/>
    </ligand>
</feature>
<feature type="binding site" evidence="1">
    <location>
        <position position="211"/>
    </location>
    <ligand>
        <name>ATP</name>
        <dbReference type="ChEBI" id="CHEBI:30616"/>
    </ligand>
</feature>
<feature type="binding site" evidence="1">
    <location>
        <begin position="260"/>
        <end position="261"/>
    </location>
    <ligand>
        <name>deamido-NAD(+)</name>
        <dbReference type="ChEBI" id="CHEBI:58437"/>
    </ligand>
</feature>
<name>NADE_STREM</name>
<dbReference type="EC" id="6.3.1.5" evidence="1"/>
<dbReference type="EMBL" id="CP001129">
    <property type="protein sequence ID" value="ACG62906.1"/>
    <property type="molecule type" value="Genomic_DNA"/>
</dbReference>
<dbReference type="RefSeq" id="WP_012516162.1">
    <property type="nucleotide sequence ID" value="NC_011134.1"/>
</dbReference>
<dbReference type="SMR" id="B4U4I9"/>
<dbReference type="KEGG" id="sez:Sez_1573"/>
<dbReference type="HOGENOM" id="CLU_059327_3_0_9"/>
<dbReference type="UniPathway" id="UPA00253">
    <property type="reaction ID" value="UER00333"/>
</dbReference>
<dbReference type="Proteomes" id="UP000001873">
    <property type="component" value="Chromosome"/>
</dbReference>
<dbReference type="GO" id="GO:0005737">
    <property type="term" value="C:cytoplasm"/>
    <property type="evidence" value="ECO:0007669"/>
    <property type="project" value="InterPro"/>
</dbReference>
<dbReference type="GO" id="GO:0005524">
    <property type="term" value="F:ATP binding"/>
    <property type="evidence" value="ECO:0007669"/>
    <property type="project" value="UniProtKB-UniRule"/>
</dbReference>
<dbReference type="GO" id="GO:0004359">
    <property type="term" value="F:glutaminase activity"/>
    <property type="evidence" value="ECO:0007669"/>
    <property type="project" value="InterPro"/>
</dbReference>
<dbReference type="GO" id="GO:0046872">
    <property type="term" value="F:metal ion binding"/>
    <property type="evidence" value="ECO:0007669"/>
    <property type="project" value="UniProtKB-KW"/>
</dbReference>
<dbReference type="GO" id="GO:0003952">
    <property type="term" value="F:NAD+ synthase (glutamine-hydrolyzing) activity"/>
    <property type="evidence" value="ECO:0007669"/>
    <property type="project" value="InterPro"/>
</dbReference>
<dbReference type="GO" id="GO:0008795">
    <property type="term" value="F:NAD+ synthase activity"/>
    <property type="evidence" value="ECO:0007669"/>
    <property type="project" value="UniProtKB-UniRule"/>
</dbReference>
<dbReference type="GO" id="GO:0009435">
    <property type="term" value="P:NAD biosynthetic process"/>
    <property type="evidence" value="ECO:0007669"/>
    <property type="project" value="UniProtKB-UniRule"/>
</dbReference>
<dbReference type="CDD" id="cd00553">
    <property type="entry name" value="NAD_synthase"/>
    <property type="match status" value="1"/>
</dbReference>
<dbReference type="FunFam" id="3.40.50.620:FF:000015">
    <property type="entry name" value="NH(3)-dependent NAD(+) synthetase"/>
    <property type="match status" value="1"/>
</dbReference>
<dbReference type="Gene3D" id="3.40.50.620">
    <property type="entry name" value="HUPs"/>
    <property type="match status" value="1"/>
</dbReference>
<dbReference type="HAMAP" id="MF_00193">
    <property type="entry name" value="NadE_ammonia_dep"/>
    <property type="match status" value="1"/>
</dbReference>
<dbReference type="InterPro" id="IPR022310">
    <property type="entry name" value="NAD/GMP_synthase"/>
</dbReference>
<dbReference type="InterPro" id="IPR003694">
    <property type="entry name" value="NAD_synthase"/>
</dbReference>
<dbReference type="InterPro" id="IPR022926">
    <property type="entry name" value="NH(3)-dep_NAD(+)_synth"/>
</dbReference>
<dbReference type="InterPro" id="IPR014729">
    <property type="entry name" value="Rossmann-like_a/b/a_fold"/>
</dbReference>
<dbReference type="NCBIfam" id="TIGR00552">
    <property type="entry name" value="nadE"/>
    <property type="match status" value="1"/>
</dbReference>
<dbReference type="NCBIfam" id="NF001979">
    <property type="entry name" value="PRK00768.1"/>
    <property type="match status" value="1"/>
</dbReference>
<dbReference type="PANTHER" id="PTHR23090">
    <property type="entry name" value="NH 3 /GLUTAMINE-DEPENDENT NAD + SYNTHETASE"/>
    <property type="match status" value="1"/>
</dbReference>
<dbReference type="PANTHER" id="PTHR23090:SF7">
    <property type="entry name" value="NH(3)-DEPENDENT NAD(+) SYNTHETASE"/>
    <property type="match status" value="1"/>
</dbReference>
<dbReference type="Pfam" id="PF02540">
    <property type="entry name" value="NAD_synthase"/>
    <property type="match status" value="1"/>
</dbReference>
<dbReference type="SUPFAM" id="SSF52402">
    <property type="entry name" value="Adenine nucleotide alpha hydrolases-like"/>
    <property type="match status" value="1"/>
</dbReference>
<keyword id="KW-0067">ATP-binding</keyword>
<keyword id="KW-0436">Ligase</keyword>
<keyword id="KW-0460">Magnesium</keyword>
<keyword id="KW-0479">Metal-binding</keyword>
<keyword id="KW-0520">NAD</keyword>
<keyword id="KW-0547">Nucleotide-binding</keyword>
<reference key="1">
    <citation type="journal article" date="2008" name="PLoS ONE">
        <title>Genome sequence of a lancefield group C Streptococcus zooepidemicus strain causing epidemic nephritis: new information about an old disease.</title>
        <authorList>
            <person name="Beres S.B."/>
            <person name="Sesso R."/>
            <person name="Pinto S.W.L."/>
            <person name="Hoe N.P."/>
            <person name="Porcella S.F."/>
            <person name="Deleo F.R."/>
            <person name="Musser J.M."/>
        </authorList>
    </citation>
    <scope>NUCLEOTIDE SEQUENCE [LARGE SCALE GENOMIC DNA]</scope>
    <source>
        <strain>MGCS10565</strain>
    </source>
</reference>
<gene>
    <name evidence="1" type="primary">nadE</name>
    <name type="ordered locus">Sez_1573</name>
</gene>
<comment type="function">
    <text evidence="1">Catalyzes the ATP-dependent amidation of deamido-NAD to form NAD. Uses ammonia as a nitrogen source.</text>
</comment>
<comment type="catalytic activity">
    <reaction evidence="1">
        <text>deamido-NAD(+) + NH4(+) + ATP = AMP + diphosphate + NAD(+) + H(+)</text>
        <dbReference type="Rhea" id="RHEA:21188"/>
        <dbReference type="ChEBI" id="CHEBI:15378"/>
        <dbReference type="ChEBI" id="CHEBI:28938"/>
        <dbReference type="ChEBI" id="CHEBI:30616"/>
        <dbReference type="ChEBI" id="CHEBI:33019"/>
        <dbReference type="ChEBI" id="CHEBI:57540"/>
        <dbReference type="ChEBI" id="CHEBI:58437"/>
        <dbReference type="ChEBI" id="CHEBI:456215"/>
        <dbReference type="EC" id="6.3.1.5"/>
    </reaction>
</comment>
<comment type="pathway">
    <text evidence="1">Cofactor biosynthesis; NAD(+) biosynthesis; NAD(+) from deamido-NAD(+) (ammonia route): step 1/1.</text>
</comment>
<comment type="subunit">
    <text evidence="1">Homodimer.</text>
</comment>
<comment type="similarity">
    <text evidence="1">Belongs to the NAD synthetase family.</text>
</comment>
<protein>
    <recommendedName>
        <fullName evidence="1">NH(3)-dependent NAD(+) synthetase</fullName>
        <ecNumber evidence="1">6.3.1.5</ecNumber>
    </recommendedName>
</protein>
<proteinExistence type="inferred from homology"/>
<organism>
    <name type="scientific">Streptococcus equi subsp. zooepidemicus (strain MGCS10565)</name>
    <dbReference type="NCBI Taxonomy" id="552526"/>
    <lineage>
        <taxon>Bacteria</taxon>
        <taxon>Bacillati</taxon>
        <taxon>Bacillota</taxon>
        <taxon>Bacilli</taxon>
        <taxon>Lactobacillales</taxon>
        <taxon>Streptococcaceae</taxon>
        <taxon>Streptococcus</taxon>
    </lineage>
</organism>